<dbReference type="EC" id="2.7.4.22" evidence="1"/>
<dbReference type="EMBL" id="CP000016">
    <property type="protein sequence ID" value="AAZ40912.1"/>
    <property type="molecule type" value="Genomic_DNA"/>
</dbReference>
<dbReference type="RefSeq" id="WP_011282819.1">
    <property type="nucleotide sequence ID" value="NC_007292.1"/>
</dbReference>
<dbReference type="SMR" id="Q493D0"/>
<dbReference type="STRING" id="291272.BPEN_281"/>
<dbReference type="KEGG" id="bpn:BPEN_281"/>
<dbReference type="eggNOG" id="COG0528">
    <property type="taxonomic scope" value="Bacteria"/>
</dbReference>
<dbReference type="HOGENOM" id="CLU_033861_0_0_6"/>
<dbReference type="OrthoDB" id="9807458at2"/>
<dbReference type="UniPathway" id="UPA00159">
    <property type="reaction ID" value="UER00275"/>
</dbReference>
<dbReference type="Proteomes" id="UP000007794">
    <property type="component" value="Chromosome"/>
</dbReference>
<dbReference type="GO" id="GO:0005829">
    <property type="term" value="C:cytosol"/>
    <property type="evidence" value="ECO:0007669"/>
    <property type="project" value="TreeGrafter"/>
</dbReference>
<dbReference type="GO" id="GO:0005524">
    <property type="term" value="F:ATP binding"/>
    <property type="evidence" value="ECO:0007669"/>
    <property type="project" value="UniProtKB-KW"/>
</dbReference>
<dbReference type="GO" id="GO:0033862">
    <property type="term" value="F:UMP kinase activity"/>
    <property type="evidence" value="ECO:0007669"/>
    <property type="project" value="UniProtKB-EC"/>
</dbReference>
<dbReference type="GO" id="GO:0044210">
    <property type="term" value="P:'de novo' CTP biosynthetic process"/>
    <property type="evidence" value="ECO:0007669"/>
    <property type="project" value="UniProtKB-UniRule"/>
</dbReference>
<dbReference type="GO" id="GO:0006225">
    <property type="term" value="P:UDP biosynthetic process"/>
    <property type="evidence" value="ECO:0007669"/>
    <property type="project" value="TreeGrafter"/>
</dbReference>
<dbReference type="CDD" id="cd04254">
    <property type="entry name" value="AAK_UMPK-PyrH-Ec"/>
    <property type="match status" value="1"/>
</dbReference>
<dbReference type="FunFam" id="3.40.1160.10:FF:000001">
    <property type="entry name" value="Uridylate kinase"/>
    <property type="match status" value="1"/>
</dbReference>
<dbReference type="Gene3D" id="3.40.1160.10">
    <property type="entry name" value="Acetylglutamate kinase-like"/>
    <property type="match status" value="1"/>
</dbReference>
<dbReference type="HAMAP" id="MF_01220_B">
    <property type="entry name" value="PyrH_B"/>
    <property type="match status" value="1"/>
</dbReference>
<dbReference type="InterPro" id="IPR036393">
    <property type="entry name" value="AceGlu_kinase-like_sf"/>
</dbReference>
<dbReference type="InterPro" id="IPR001048">
    <property type="entry name" value="Asp/Glu/Uridylate_kinase"/>
</dbReference>
<dbReference type="InterPro" id="IPR011817">
    <property type="entry name" value="Uridylate_kinase"/>
</dbReference>
<dbReference type="InterPro" id="IPR015963">
    <property type="entry name" value="Uridylate_kinase_bac"/>
</dbReference>
<dbReference type="NCBIfam" id="TIGR02075">
    <property type="entry name" value="pyrH_bact"/>
    <property type="match status" value="1"/>
</dbReference>
<dbReference type="PANTHER" id="PTHR42833">
    <property type="entry name" value="URIDYLATE KINASE"/>
    <property type="match status" value="1"/>
</dbReference>
<dbReference type="PANTHER" id="PTHR42833:SF4">
    <property type="entry name" value="URIDYLATE KINASE PUMPKIN, CHLOROPLASTIC"/>
    <property type="match status" value="1"/>
</dbReference>
<dbReference type="Pfam" id="PF00696">
    <property type="entry name" value="AA_kinase"/>
    <property type="match status" value="1"/>
</dbReference>
<dbReference type="PIRSF" id="PIRSF005650">
    <property type="entry name" value="Uridylate_kin"/>
    <property type="match status" value="1"/>
</dbReference>
<dbReference type="SUPFAM" id="SSF53633">
    <property type="entry name" value="Carbamate kinase-like"/>
    <property type="match status" value="1"/>
</dbReference>
<reference key="1">
    <citation type="journal article" date="2005" name="Genome Res.">
        <title>Genome sequence of Blochmannia pennsylvanicus indicates parallel evolutionary trends among bacterial mutualists of insects.</title>
        <authorList>
            <person name="Degnan P.H."/>
            <person name="Lazarus A.B."/>
            <person name="Wernegreen J.J."/>
        </authorList>
    </citation>
    <scope>NUCLEOTIDE SEQUENCE [LARGE SCALE GENOMIC DNA]</scope>
    <source>
        <strain>BPEN</strain>
    </source>
</reference>
<proteinExistence type="inferred from homology"/>
<name>PYRH_BLOPB</name>
<gene>
    <name evidence="1" type="primary">pyrH</name>
    <name type="ordered locus">BPEN_281</name>
</gene>
<protein>
    <recommendedName>
        <fullName evidence="1">Uridylate kinase</fullName>
        <shortName evidence="1">UK</shortName>
        <ecNumber evidence="1">2.7.4.22</ecNumber>
    </recommendedName>
    <alternativeName>
        <fullName evidence="1">Uridine monophosphate kinase</fullName>
        <shortName evidence="1">UMP kinase</shortName>
        <shortName evidence="1">UMPK</shortName>
    </alternativeName>
</protein>
<evidence type="ECO:0000255" key="1">
    <source>
        <dbReference type="HAMAP-Rule" id="MF_01220"/>
    </source>
</evidence>
<keyword id="KW-0021">Allosteric enzyme</keyword>
<keyword id="KW-0067">ATP-binding</keyword>
<keyword id="KW-0963">Cytoplasm</keyword>
<keyword id="KW-0418">Kinase</keyword>
<keyword id="KW-0547">Nucleotide-binding</keyword>
<keyword id="KW-0665">Pyrimidine biosynthesis</keyword>
<keyword id="KW-1185">Reference proteome</keyword>
<keyword id="KW-0808">Transferase</keyword>
<feature type="chain" id="PRO_0000323796" description="Uridylate kinase">
    <location>
        <begin position="1"/>
        <end position="241"/>
    </location>
</feature>
<feature type="region of interest" description="Involved in allosteric activation by GTP" evidence="1">
    <location>
        <begin position="23"/>
        <end position="28"/>
    </location>
</feature>
<feature type="binding site" evidence="1">
    <location>
        <begin position="15"/>
        <end position="18"/>
    </location>
    <ligand>
        <name>ATP</name>
        <dbReference type="ChEBI" id="CHEBI:30616"/>
    </ligand>
</feature>
<feature type="binding site" evidence="1">
    <location>
        <position position="57"/>
    </location>
    <ligand>
        <name>UMP</name>
        <dbReference type="ChEBI" id="CHEBI:57865"/>
    </ligand>
</feature>
<feature type="binding site" evidence="1">
    <location>
        <position position="58"/>
    </location>
    <ligand>
        <name>ATP</name>
        <dbReference type="ChEBI" id="CHEBI:30616"/>
    </ligand>
</feature>
<feature type="binding site" evidence="1">
    <location>
        <position position="62"/>
    </location>
    <ligand>
        <name>ATP</name>
        <dbReference type="ChEBI" id="CHEBI:30616"/>
    </ligand>
</feature>
<feature type="binding site" evidence="1">
    <location>
        <position position="77"/>
    </location>
    <ligand>
        <name>UMP</name>
        <dbReference type="ChEBI" id="CHEBI:57865"/>
    </ligand>
</feature>
<feature type="binding site" evidence="1">
    <location>
        <begin position="138"/>
        <end position="145"/>
    </location>
    <ligand>
        <name>UMP</name>
        <dbReference type="ChEBI" id="CHEBI:57865"/>
    </ligand>
</feature>
<feature type="binding site" evidence="1">
    <location>
        <position position="165"/>
    </location>
    <ligand>
        <name>ATP</name>
        <dbReference type="ChEBI" id="CHEBI:30616"/>
    </ligand>
</feature>
<feature type="binding site" evidence="1">
    <location>
        <position position="171"/>
    </location>
    <ligand>
        <name>ATP</name>
        <dbReference type="ChEBI" id="CHEBI:30616"/>
    </ligand>
</feature>
<feature type="binding site" evidence="1">
    <location>
        <position position="174"/>
    </location>
    <ligand>
        <name>ATP</name>
        <dbReference type="ChEBI" id="CHEBI:30616"/>
    </ligand>
</feature>
<sequence>MVTHTKPIYRRIVLKMSGEALQGAEGFGIDTTILNRMVTEVKELVKIGIQIGIVMGGGNLFRGAELVKSGMNRIVGDHIGMLATIMNGLAMRSALNHAYVHSHLMSAIPLNGVCDHYNWMKAINLLSNNWVVIFAAGTGNPLFTTDSAACLRGIEIKADVVLKATKVDGVFSTDPIQHPDATLYEQLSYQDVLERELKVMDLTAFTLAREHNLPIRIFNINKLGALKRIIMGYKEGTLITK</sequence>
<accession>Q493D0</accession>
<organism>
    <name type="scientific">Blochmanniella pennsylvanica (strain BPEN)</name>
    <dbReference type="NCBI Taxonomy" id="291272"/>
    <lineage>
        <taxon>Bacteria</taxon>
        <taxon>Pseudomonadati</taxon>
        <taxon>Pseudomonadota</taxon>
        <taxon>Gammaproteobacteria</taxon>
        <taxon>Enterobacterales</taxon>
        <taxon>Enterobacteriaceae</taxon>
        <taxon>ant endosymbionts</taxon>
        <taxon>Candidatus Blochmanniella</taxon>
    </lineage>
</organism>
<comment type="function">
    <text evidence="1">Catalyzes the reversible phosphorylation of UMP to UDP.</text>
</comment>
<comment type="catalytic activity">
    <reaction evidence="1">
        <text>UMP + ATP = UDP + ADP</text>
        <dbReference type="Rhea" id="RHEA:24400"/>
        <dbReference type="ChEBI" id="CHEBI:30616"/>
        <dbReference type="ChEBI" id="CHEBI:57865"/>
        <dbReference type="ChEBI" id="CHEBI:58223"/>
        <dbReference type="ChEBI" id="CHEBI:456216"/>
        <dbReference type="EC" id="2.7.4.22"/>
    </reaction>
</comment>
<comment type="activity regulation">
    <text evidence="1">Allosterically activated by GTP. Inhibited by UTP.</text>
</comment>
<comment type="pathway">
    <text evidence="1">Pyrimidine metabolism; CTP biosynthesis via de novo pathway; UDP from UMP (UMPK route): step 1/1.</text>
</comment>
<comment type="subunit">
    <text evidence="1">Homohexamer.</text>
</comment>
<comment type="subcellular location">
    <subcellularLocation>
        <location evidence="1">Cytoplasm</location>
    </subcellularLocation>
</comment>
<comment type="similarity">
    <text evidence="1">Belongs to the UMP kinase family.</text>
</comment>